<feature type="chain" id="PRO_0000157846" description="Uncharacterized protein AF_1281">
    <location>
        <begin position="1"/>
        <end position="168"/>
    </location>
</feature>
<feature type="domain" description="PfpI endopeptidase" evidence="1">
    <location>
        <begin position="1"/>
        <end position="166"/>
    </location>
</feature>
<dbReference type="EMBL" id="AE000782">
    <property type="protein sequence ID" value="AAB89965.1"/>
    <property type="molecule type" value="Genomic_DNA"/>
</dbReference>
<dbReference type="PIR" id="H69409">
    <property type="entry name" value="H69409"/>
</dbReference>
<dbReference type="RefSeq" id="WP_010878776.1">
    <property type="nucleotide sequence ID" value="NC_000917.1"/>
</dbReference>
<dbReference type="SMR" id="O28987"/>
<dbReference type="STRING" id="224325.AF_1281"/>
<dbReference type="MEROPS" id="C56.001"/>
<dbReference type="PaxDb" id="224325-AF_1281"/>
<dbReference type="EnsemblBacteria" id="AAB89965">
    <property type="protein sequence ID" value="AAB89965"/>
    <property type="gene ID" value="AF_1281"/>
</dbReference>
<dbReference type="KEGG" id="afu:AF_1281"/>
<dbReference type="eggNOG" id="arCOG00769">
    <property type="taxonomic scope" value="Archaea"/>
</dbReference>
<dbReference type="HOGENOM" id="CLU_000445_44_4_2"/>
<dbReference type="OrthoDB" id="82036at2157"/>
<dbReference type="PhylomeDB" id="O28987"/>
<dbReference type="Proteomes" id="UP000002199">
    <property type="component" value="Chromosome"/>
</dbReference>
<dbReference type="CDD" id="cd03134">
    <property type="entry name" value="GATase1_PfpI_like"/>
    <property type="match status" value="1"/>
</dbReference>
<dbReference type="Gene3D" id="3.40.50.880">
    <property type="match status" value="1"/>
</dbReference>
<dbReference type="InterPro" id="IPR006286">
    <property type="entry name" value="C56_PfpI-like"/>
</dbReference>
<dbReference type="InterPro" id="IPR029062">
    <property type="entry name" value="Class_I_gatase-like"/>
</dbReference>
<dbReference type="InterPro" id="IPR002818">
    <property type="entry name" value="DJ-1/PfpI"/>
</dbReference>
<dbReference type="NCBIfam" id="TIGR01382">
    <property type="entry name" value="PfpI"/>
    <property type="match status" value="1"/>
</dbReference>
<dbReference type="PANTHER" id="PTHR42733">
    <property type="entry name" value="DJ-1 PROTEIN"/>
    <property type="match status" value="1"/>
</dbReference>
<dbReference type="PANTHER" id="PTHR42733:SF2">
    <property type="entry name" value="DJ-1_THIJ_PFPI FAMILY PROTEIN"/>
    <property type="match status" value="1"/>
</dbReference>
<dbReference type="Pfam" id="PF01965">
    <property type="entry name" value="DJ-1_PfpI"/>
    <property type="match status" value="1"/>
</dbReference>
<dbReference type="SUPFAM" id="SSF52317">
    <property type="entry name" value="Class I glutamine amidotransferase-like"/>
    <property type="match status" value="1"/>
</dbReference>
<dbReference type="PROSITE" id="PS51276">
    <property type="entry name" value="PEPTIDASE_C56_PFPI"/>
    <property type="match status" value="1"/>
</dbReference>
<gene>
    <name type="ordered locus">AF_1281</name>
</gene>
<keyword id="KW-1185">Reference proteome</keyword>
<reference key="1">
    <citation type="journal article" date="1997" name="Nature">
        <title>The complete genome sequence of the hyperthermophilic, sulphate-reducing archaeon Archaeoglobus fulgidus.</title>
        <authorList>
            <person name="Klenk H.-P."/>
            <person name="Clayton R.A."/>
            <person name="Tomb J.-F."/>
            <person name="White O."/>
            <person name="Nelson K.E."/>
            <person name="Ketchum K.A."/>
            <person name="Dodson R.J."/>
            <person name="Gwinn M.L."/>
            <person name="Hickey E.K."/>
            <person name="Peterson J.D."/>
            <person name="Richardson D.L."/>
            <person name="Kerlavage A.R."/>
            <person name="Graham D.E."/>
            <person name="Kyrpides N.C."/>
            <person name="Fleischmann R.D."/>
            <person name="Quackenbush J."/>
            <person name="Lee N.H."/>
            <person name="Sutton G.G."/>
            <person name="Gill S.R."/>
            <person name="Kirkness E.F."/>
            <person name="Dougherty B.A."/>
            <person name="McKenney K."/>
            <person name="Adams M.D."/>
            <person name="Loftus B.J."/>
            <person name="Peterson S.N."/>
            <person name="Reich C.I."/>
            <person name="McNeil L.K."/>
            <person name="Badger J.H."/>
            <person name="Glodek A."/>
            <person name="Zhou L."/>
            <person name="Overbeek R."/>
            <person name="Gocayne J.D."/>
            <person name="Weidman J.F."/>
            <person name="McDonald L.A."/>
            <person name="Utterback T.R."/>
            <person name="Cotton M.D."/>
            <person name="Spriggs T."/>
            <person name="Artiach P."/>
            <person name="Kaine B.P."/>
            <person name="Sykes S.M."/>
            <person name="Sadow P.W."/>
            <person name="D'Andrea K.P."/>
            <person name="Bowman C."/>
            <person name="Fujii C."/>
            <person name="Garland S.A."/>
            <person name="Mason T.M."/>
            <person name="Olsen G.J."/>
            <person name="Fraser C.M."/>
            <person name="Smith H.O."/>
            <person name="Woese C.R."/>
            <person name="Venter J.C."/>
        </authorList>
    </citation>
    <scope>NUCLEOTIDE SEQUENCE [LARGE SCALE GENOMIC DNA]</scope>
    <source>
        <strain>ATCC 49558 / DSM 4304 / JCM 9628 / NBRC 100126 / VC-16</strain>
    </source>
</reference>
<comment type="similarity">
    <text evidence="2">Belongs to the peptidase C56 family.</text>
</comment>
<proteinExistence type="inferred from homology"/>
<accession>O28987</accession>
<sequence length="168" mass="18968">MRVLILAENEFEDLELFYPLYRLREEGLEVKVASSSLEVRVGKKGYQVRPDLTYEDVKVEDYAGLVIPGGKSPERVRINERAVEIVKDFLELGKPVAAICHGPQLLISAMAVKGRRMTSWIGIRDDLIAAGALYEDRPVVVDGNVITSRMPDDLPYFCGELIKILKRY</sequence>
<protein>
    <recommendedName>
        <fullName>Uncharacterized protein AF_1281</fullName>
    </recommendedName>
</protein>
<evidence type="ECO:0000255" key="1">
    <source>
        <dbReference type="PROSITE-ProRule" id="PRU00608"/>
    </source>
</evidence>
<evidence type="ECO:0000305" key="2"/>
<name>Y1281_ARCFU</name>
<organism>
    <name type="scientific">Archaeoglobus fulgidus (strain ATCC 49558 / DSM 4304 / JCM 9628 / NBRC 100126 / VC-16)</name>
    <dbReference type="NCBI Taxonomy" id="224325"/>
    <lineage>
        <taxon>Archaea</taxon>
        <taxon>Methanobacteriati</taxon>
        <taxon>Methanobacteriota</taxon>
        <taxon>Archaeoglobi</taxon>
        <taxon>Archaeoglobales</taxon>
        <taxon>Archaeoglobaceae</taxon>
        <taxon>Archaeoglobus</taxon>
    </lineage>
</organism>